<protein>
    <recommendedName>
        <fullName evidence="4 9">Immunoglobulin kappa variable 3D-20</fullName>
    </recommendedName>
</protein>
<feature type="signal peptide" evidence="2">
    <location>
        <begin position="1"/>
        <end position="20"/>
    </location>
</feature>
<feature type="chain" id="PRO_5002170225" description="Immunoglobulin kappa variable 3D-20" evidence="2">
    <location>
        <begin position="21"/>
        <end position="116"/>
    </location>
</feature>
<feature type="domain" description="Ig-like" evidence="3">
    <location>
        <begin position="21"/>
        <end position="116" status="greater than"/>
    </location>
</feature>
<feature type="region of interest" description="Framework-1" evidence="1">
    <location>
        <begin position="21"/>
        <end position="43"/>
    </location>
</feature>
<feature type="region of interest" description="Complementarity-determining-1" evidence="1">
    <location>
        <begin position="44"/>
        <end position="55"/>
    </location>
</feature>
<feature type="region of interest" description="Framework-2" evidence="1">
    <location>
        <begin position="56"/>
        <end position="70"/>
    </location>
</feature>
<feature type="region of interest" description="Complementarity-determining-2" evidence="1">
    <location>
        <begin position="71"/>
        <end position="77"/>
    </location>
</feature>
<feature type="region of interest" description="Framework-3" evidence="1">
    <location>
        <begin position="78"/>
        <end position="109"/>
    </location>
</feature>
<feature type="region of interest" description="Complementarity-determining-3" evidence="1">
    <location>
        <begin position="110"/>
        <end position="116" status="greater than"/>
    </location>
</feature>
<feature type="disulfide bond" evidence="3">
    <location>
        <begin position="43"/>
        <end position="109"/>
    </location>
</feature>
<feature type="non-terminal residue">
    <location>
        <position position="116"/>
    </location>
</feature>
<name>KVD20_HUMAN</name>
<reference key="1">
    <citation type="journal article" date="2005" name="Nature">
        <title>Generation and annotation of the DNA sequences of human chromosomes 2 and 4.</title>
        <authorList>
            <person name="Hillier L.W."/>
            <person name="Graves T.A."/>
            <person name="Fulton R.S."/>
            <person name="Fulton L.A."/>
            <person name="Pepin K.H."/>
            <person name="Minx P."/>
            <person name="Wagner-McPherson C."/>
            <person name="Layman D."/>
            <person name="Wylie K."/>
            <person name="Sekhon M."/>
            <person name="Becker M.C."/>
            <person name="Fewell G.A."/>
            <person name="Delehaunty K.D."/>
            <person name="Miner T.L."/>
            <person name="Nash W.E."/>
            <person name="Kremitzki C."/>
            <person name="Oddy L."/>
            <person name="Du H."/>
            <person name="Sun H."/>
            <person name="Bradshaw-Cordum H."/>
            <person name="Ali J."/>
            <person name="Carter J."/>
            <person name="Cordes M."/>
            <person name="Harris A."/>
            <person name="Isak A."/>
            <person name="van Brunt A."/>
            <person name="Nguyen C."/>
            <person name="Du F."/>
            <person name="Courtney L."/>
            <person name="Kalicki J."/>
            <person name="Ozersky P."/>
            <person name="Abbott S."/>
            <person name="Armstrong J."/>
            <person name="Belter E.A."/>
            <person name="Caruso L."/>
            <person name="Cedroni M."/>
            <person name="Cotton M."/>
            <person name="Davidson T."/>
            <person name="Desai A."/>
            <person name="Elliott G."/>
            <person name="Erb T."/>
            <person name="Fronick C."/>
            <person name="Gaige T."/>
            <person name="Haakenson W."/>
            <person name="Haglund K."/>
            <person name="Holmes A."/>
            <person name="Harkins R."/>
            <person name="Kim K."/>
            <person name="Kruchowski S.S."/>
            <person name="Strong C.M."/>
            <person name="Grewal N."/>
            <person name="Goyea E."/>
            <person name="Hou S."/>
            <person name="Levy A."/>
            <person name="Martinka S."/>
            <person name="Mead K."/>
            <person name="McLellan M.D."/>
            <person name="Meyer R."/>
            <person name="Randall-Maher J."/>
            <person name="Tomlinson C."/>
            <person name="Dauphin-Kohlberg S."/>
            <person name="Kozlowicz-Reilly A."/>
            <person name="Shah N."/>
            <person name="Swearengen-Shahid S."/>
            <person name="Snider J."/>
            <person name="Strong J.T."/>
            <person name="Thompson J."/>
            <person name="Yoakum M."/>
            <person name="Leonard S."/>
            <person name="Pearman C."/>
            <person name="Trani L."/>
            <person name="Radionenko M."/>
            <person name="Waligorski J.E."/>
            <person name="Wang C."/>
            <person name="Rock S.M."/>
            <person name="Tin-Wollam A.-M."/>
            <person name="Maupin R."/>
            <person name="Latreille P."/>
            <person name="Wendl M.C."/>
            <person name="Yang S.-P."/>
            <person name="Pohl C."/>
            <person name="Wallis J.W."/>
            <person name="Spieth J."/>
            <person name="Bieri T.A."/>
            <person name="Berkowicz N."/>
            <person name="Nelson J.O."/>
            <person name="Osborne J."/>
            <person name="Ding L."/>
            <person name="Meyer R."/>
            <person name="Sabo A."/>
            <person name="Shotland Y."/>
            <person name="Sinha P."/>
            <person name="Wohldmann P.E."/>
            <person name="Cook L.L."/>
            <person name="Hickenbotham M.T."/>
            <person name="Eldred J."/>
            <person name="Williams D."/>
            <person name="Jones T.A."/>
            <person name="She X."/>
            <person name="Ciccarelli F.D."/>
            <person name="Izaurralde E."/>
            <person name="Taylor J."/>
            <person name="Schmutz J."/>
            <person name="Myers R.M."/>
            <person name="Cox D.R."/>
            <person name="Huang X."/>
            <person name="McPherson J.D."/>
            <person name="Mardis E.R."/>
            <person name="Clifton S.W."/>
            <person name="Warren W.C."/>
            <person name="Chinwalla A.T."/>
            <person name="Eddy S.R."/>
            <person name="Marra M.A."/>
            <person name="Ovcharenko I."/>
            <person name="Furey T.S."/>
            <person name="Miller W."/>
            <person name="Eichler E.E."/>
            <person name="Bork P."/>
            <person name="Suyama M."/>
            <person name="Torrents D."/>
            <person name="Waterston R.H."/>
            <person name="Wilson R.K."/>
        </authorList>
    </citation>
    <scope>NUCLEOTIDE SEQUENCE [LARGE SCALE GENOMIC DNA] (IMGT ALLELE IGKV3D-20*01)</scope>
</reference>
<reference key="2">
    <citation type="journal article" date="2001" name="Exp. Clin. Immunogenet.">
        <title>Nomenclature of the human immunoglobulin kappa (IGK) genes.</title>
        <authorList>
            <person name="Lefranc M.P."/>
        </authorList>
    </citation>
    <scope>NOMEMCLATURE</scope>
</reference>
<reference key="3">
    <citation type="book" date="2001" name="The Immunoglobulin FactsBook.">
        <title>The Immunoglobulin FactsBook.</title>
        <editorList>
            <person name="Lefranc M.P."/>
            <person name="Lefranc G."/>
        </editorList>
        <authorList>
            <person name="Lefranc M.P."/>
            <person name="Lefranc G."/>
        </authorList>
    </citation>
    <scope>NOMENCLATURE</scope>
</reference>
<reference key="4">
    <citation type="journal article" date="2007" name="Annu. Rev. Genet.">
        <title>Immunoglobulin somatic hypermutation.</title>
        <authorList>
            <person name="Teng G."/>
            <person name="Papavasiliou F.N."/>
        </authorList>
    </citation>
    <scope>REVIEW ON SOMATIC HYPERMUTATION</scope>
</reference>
<reference key="5">
    <citation type="journal article" date="2010" name="J. Allergy Clin. Immunol.">
        <title>Structure and function of immunoglobulins.</title>
        <authorList>
            <person name="Schroeder H.W. Jr."/>
            <person name="Cavacini L."/>
        </authorList>
    </citation>
    <scope>REVIEW ON IMMUNOGLOBULINS</scope>
</reference>
<reference key="6">
    <citation type="journal article" date="2012" name="Nat. Rev. Immunol.">
        <title>Molecular programming of B cell memory.</title>
        <authorList>
            <person name="McHeyzer-Williams M."/>
            <person name="Okitsu S."/>
            <person name="Wang N."/>
            <person name="McHeyzer-Williams L."/>
        </authorList>
    </citation>
    <scope>REVIEW ON FUNCTION</scope>
</reference>
<reference key="7">
    <citation type="journal article" date="2014" name="Front. Immunol.">
        <title>Immunoglobulin and T Cell Receptor Genes: IMGT((R)) and the Birth and Rise of Immunoinformatics.</title>
        <authorList>
            <person name="Lefranc M.P."/>
        </authorList>
    </citation>
    <scope>NOMENCLATURE</scope>
</reference>
<accession>A0A0C4DH25</accession>
<gene>
    <name evidence="4 9" type="primary">IGKV3D-20</name>
</gene>
<proteinExistence type="evidence at protein level"/>
<organism>
    <name type="scientific">Homo sapiens</name>
    <name type="common">Human</name>
    <dbReference type="NCBI Taxonomy" id="9606"/>
    <lineage>
        <taxon>Eukaryota</taxon>
        <taxon>Metazoa</taxon>
        <taxon>Chordata</taxon>
        <taxon>Craniata</taxon>
        <taxon>Vertebrata</taxon>
        <taxon>Euteleostomi</taxon>
        <taxon>Mammalia</taxon>
        <taxon>Eutheria</taxon>
        <taxon>Euarchontoglires</taxon>
        <taxon>Primates</taxon>
        <taxon>Haplorrhini</taxon>
        <taxon>Catarrhini</taxon>
        <taxon>Hominidae</taxon>
        <taxon>Homo</taxon>
    </lineage>
</organism>
<dbReference type="EMBL" id="AC245506">
    <property type="status" value="NOT_ANNOTATED_CDS"/>
    <property type="molecule type" value="Genomic_DNA"/>
</dbReference>
<dbReference type="SMR" id="A0A0C4DH25"/>
<dbReference type="FunCoup" id="A0A0C4DH25">
    <property type="interactions" value="362"/>
</dbReference>
<dbReference type="IMGT_GENE-DB" id="IGKV3D-20"/>
<dbReference type="BioMuta" id="IGKV3D-20"/>
<dbReference type="jPOST" id="A0A0C4DH25"/>
<dbReference type="MassIVE" id="A0A0C4DH25"/>
<dbReference type="PRIDE" id="A0A0C4DH25"/>
<dbReference type="Pumba" id="A0A0C4DH25"/>
<dbReference type="Ensembl" id="ENST00000390270.2">
    <property type="protein sequence ID" value="ENSP00000374805.2"/>
    <property type="gene ID" value="ENSG00000211625.2"/>
</dbReference>
<dbReference type="AGR" id="HGNC:5825"/>
<dbReference type="GeneCards" id="IGKV3D-20"/>
<dbReference type="HGNC" id="HGNC:5825">
    <property type="gene designation" value="IGKV3D-20"/>
</dbReference>
<dbReference type="HPA" id="ENSG00000211625">
    <property type="expression patterns" value="Tissue enhanced (intestine, lymphoid tissue)"/>
</dbReference>
<dbReference type="neXtProt" id="NX_A0A0C4DH25"/>
<dbReference type="OpenTargets" id="ENSG00000211625"/>
<dbReference type="VEuPathDB" id="HostDB:ENSG00000211625"/>
<dbReference type="GeneTree" id="ENSGT00940000154413"/>
<dbReference type="HOGENOM" id="CLU_077975_4_1_1"/>
<dbReference type="InParanoid" id="A0A0C4DH25"/>
<dbReference type="OMA" id="ISHTDAR"/>
<dbReference type="OrthoDB" id="8908372at2759"/>
<dbReference type="PAN-GO" id="A0A0C4DH25">
    <property type="GO annotations" value="3 GO annotations based on evolutionary models"/>
</dbReference>
<dbReference type="PhylomeDB" id="A0A0C4DH25"/>
<dbReference type="PathwayCommons" id="A0A0C4DH25"/>
<dbReference type="Reactome" id="R-HSA-166663">
    <property type="pathway name" value="Initial triggering of complement"/>
</dbReference>
<dbReference type="Reactome" id="R-HSA-173623">
    <property type="pathway name" value="Classical antibody-mediated complement activation"/>
</dbReference>
<dbReference type="Reactome" id="R-HSA-198933">
    <property type="pathway name" value="Immunoregulatory interactions between a Lymphoid and a non-Lymphoid cell"/>
</dbReference>
<dbReference type="Reactome" id="R-HSA-202733">
    <property type="pathway name" value="Cell surface interactions at the vascular wall"/>
</dbReference>
<dbReference type="Reactome" id="R-HSA-2029481">
    <property type="pathway name" value="FCGR activation"/>
</dbReference>
<dbReference type="Reactome" id="R-HSA-2029482">
    <property type="pathway name" value="Regulation of actin dynamics for phagocytic cup formation"/>
</dbReference>
<dbReference type="Reactome" id="R-HSA-2029485">
    <property type="pathway name" value="Role of phospholipids in phagocytosis"/>
</dbReference>
<dbReference type="Reactome" id="R-HSA-2168880">
    <property type="pathway name" value="Scavenging of heme from plasma"/>
</dbReference>
<dbReference type="Reactome" id="R-HSA-2454202">
    <property type="pathway name" value="Fc epsilon receptor (FCERI) signaling"/>
</dbReference>
<dbReference type="Reactome" id="R-HSA-2730905">
    <property type="pathway name" value="Role of LAT2/NTAL/LAB on calcium mobilization"/>
</dbReference>
<dbReference type="Reactome" id="R-HSA-2871796">
    <property type="pathway name" value="FCERI mediated MAPK activation"/>
</dbReference>
<dbReference type="Reactome" id="R-HSA-2871809">
    <property type="pathway name" value="FCERI mediated Ca+2 mobilization"/>
</dbReference>
<dbReference type="Reactome" id="R-HSA-2871837">
    <property type="pathway name" value="FCERI mediated NF-kB activation"/>
</dbReference>
<dbReference type="Reactome" id="R-HSA-5690714">
    <property type="pathway name" value="CD22 mediated BCR regulation"/>
</dbReference>
<dbReference type="Reactome" id="R-HSA-9664323">
    <property type="pathway name" value="FCGR3A-mediated IL10 synthesis"/>
</dbReference>
<dbReference type="Reactome" id="R-HSA-9664422">
    <property type="pathway name" value="FCGR3A-mediated phagocytosis"/>
</dbReference>
<dbReference type="Reactome" id="R-HSA-9679191">
    <property type="pathway name" value="Potential therapeutics for SARS"/>
</dbReference>
<dbReference type="Reactome" id="R-HSA-977606">
    <property type="pathway name" value="Regulation of Complement cascade"/>
</dbReference>
<dbReference type="Reactome" id="R-HSA-983695">
    <property type="pathway name" value="Antigen activates B Cell Receptor (BCR) leading to generation of second messengers"/>
</dbReference>
<dbReference type="SignaLink" id="A0A0C4DH25"/>
<dbReference type="Pharos" id="A0A0C4DH25">
    <property type="development level" value="Tdark"/>
</dbReference>
<dbReference type="PRO" id="PR:A0A0C4DH25"/>
<dbReference type="Proteomes" id="UP000005640">
    <property type="component" value="Chromosome 2"/>
</dbReference>
<dbReference type="RNAct" id="A0A0C4DH25">
    <property type="molecule type" value="protein"/>
</dbReference>
<dbReference type="Bgee" id="ENSG00000211625">
    <property type="expression patterns" value="Expressed in rectum and 85 other cell types or tissues"/>
</dbReference>
<dbReference type="GO" id="GO:0005576">
    <property type="term" value="C:extracellular region"/>
    <property type="evidence" value="ECO:0000304"/>
    <property type="project" value="Reactome"/>
</dbReference>
<dbReference type="GO" id="GO:0019814">
    <property type="term" value="C:immunoglobulin complex"/>
    <property type="evidence" value="ECO:0000318"/>
    <property type="project" value="GO_Central"/>
</dbReference>
<dbReference type="GO" id="GO:0005886">
    <property type="term" value="C:plasma membrane"/>
    <property type="evidence" value="ECO:0000304"/>
    <property type="project" value="Reactome"/>
</dbReference>
<dbReference type="GO" id="GO:0002250">
    <property type="term" value="P:adaptive immune response"/>
    <property type="evidence" value="ECO:0007669"/>
    <property type="project" value="UniProtKB-KW"/>
</dbReference>
<dbReference type="GO" id="GO:0006955">
    <property type="term" value="P:immune response"/>
    <property type="evidence" value="ECO:0000318"/>
    <property type="project" value="GO_Central"/>
</dbReference>
<dbReference type="CDD" id="cd04980">
    <property type="entry name" value="IgV_L_kappa"/>
    <property type="match status" value="1"/>
</dbReference>
<dbReference type="FunFam" id="2.60.40.10:FF:000350">
    <property type="entry name" value="Immunoglobulin kappa chain variable 18-36"/>
    <property type="match status" value="1"/>
</dbReference>
<dbReference type="Gene3D" id="2.60.40.10">
    <property type="entry name" value="Immunoglobulins"/>
    <property type="match status" value="1"/>
</dbReference>
<dbReference type="InterPro" id="IPR007110">
    <property type="entry name" value="Ig-like_dom"/>
</dbReference>
<dbReference type="InterPro" id="IPR036179">
    <property type="entry name" value="Ig-like_dom_sf"/>
</dbReference>
<dbReference type="InterPro" id="IPR013783">
    <property type="entry name" value="Ig-like_fold"/>
</dbReference>
<dbReference type="InterPro" id="IPR003599">
    <property type="entry name" value="Ig_sub"/>
</dbReference>
<dbReference type="InterPro" id="IPR013106">
    <property type="entry name" value="Ig_V-set"/>
</dbReference>
<dbReference type="InterPro" id="IPR050150">
    <property type="entry name" value="IgV_Light_Chain"/>
</dbReference>
<dbReference type="PANTHER" id="PTHR23267">
    <property type="entry name" value="IMMUNOGLOBULIN LIGHT CHAIN"/>
    <property type="match status" value="1"/>
</dbReference>
<dbReference type="Pfam" id="PF07686">
    <property type="entry name" value="V-set"/>
    <property type="match status" value="1"/>
</dbReference>
<dbReference type="SMART" id="SM00409">
    <property type="entry name" value="IG"/>
    <property type="match status" value="1"/>
</dbReference>
<dbReference type="SMART" id="SM00406">
    <property type="entry name" value="IGv"/>
    <property type="match status" value="1"/>
</dbReference>
<dbReference type="SUPFAM" id="SSF48726">
    <property type="entry name" value="Immunoglobulin"/>
    <property type="match status" value="1"/>
</dbReference>
<dbReference type="PROSITE" id="PS50835">
    <property type="entry name" value="IG_LIKE"/>
    <property type="match status" value="1"/>
</dbReference>
<keyword id="KW-1064">Adaptive immunity</keyword>
<keyword id="KW-1003">Cell membrane</keyword>
<keyword id="KW-1015">Disulfide bond</keyword>
<keyword id="KW-0391">Immunity</keyword>
<keyword id="KW-1280">Immunoglobulin</keyword>
<keyword id="KW-0393">Immunoglobulin domain</keyword>
<keyword id="KW-0472">Membrane</keyword>
<keyword id="KW-1267">Proteomics identification</keyword>
<keyword id="KW-1185">Reference proteome</keyword>
<keyword id="KW-0964">Secreted</keyword>
<keyword id="KW-0732">Signal</keyword>
<evidence type="ECO:0000250" key="1">
    <source>
        <dbReference type="UniProtKB" id="P01602"/>
    </source>
</evidence>
<evidence type="ECO:0000255" key="2"/>
<evidence type="ECO:0000255" key="3">
    <source>
        <dbReference type="PROSITE-ProRule" id="PRU00114"/>
    </source>
</evidence>
<evidence type="ECO:0000303" key="4">
    <source>
    </source>
</evidence>
<evidence type="ECO:0000303" key="5">
    <source>
    </source>
</evidence>
<evidence type="ECO:0000303" key="6">
    <source>
    </source>
</evidence>
<evidence type="ECO:0000303" key="7">
    <source>
    </source>
</evidence>
<evidence type="ECO:0000303" key="8">
    <source>
    </source>
</evidence>
<evidence type="ECO:0000303" key="9">
    <source ref="3"/>
</evidence>
<evidence type="ECO:0000305" key="10"/>
<comment type="function">
    <text evidence="5 6 7 8">V region of the variable domain of immunoglobulin light chains that participates in the antigen recognition (PubMed:24600447). Immunoglobulins, also known as antibodies, are membrane-bound or secreted glycoproteins produced by B lymphocytes. In the recognition phase of humoral immunity, the membrane-bound immunoglobulins serve as receptors which, upon binding of a specific antigen, trigger the clonal expansion and differentiation of B lymphocytes into immunoglobulins-secreting plasma cells. Secreted immunoglobulins mediate the effector phase of humoral immunity, which results in the elimination of bound antigens (PubMed:20176268, PubMed:22158414). The antigen binding site is formed by the variable domain of one heavy chain, together with that of its associated light chain. Thus, each immunoglobulin has two antigen binding sites with remarkable affinity for a particular antigen. The variable domains are assembled by a process called V-(D)-J rearrangement and can then be subjected to somatic hypermutations which, after exposure to antigen and selection, allow affinity maturation for a particular antigen (PubMed:17576170, PubMed:20176268).</text>
</comment>
<comment type="subunit">
    <text evidence="6">Immunoglobulins are composed of two identical heavy chains and two identical light chains; disulfide-linked.</text>
</comment>
<comment type="subcellular location">
    <subcellularLocation>
        <location evidence="6 7">Secreted</location>
    </subcellularLocation>
    <subcellularLocation>
        <location evidence="6 7">Cell membrane</location>
    </subcellularLocation>
</comment>
<comment type="polymorphism">
    <text>There are several alleles. The sequence shown is that of IMGT allele IGKV3D-20*01.</text>
</comment>
<comment type="caution">
    <text evidence="10">For an example of a full-length immunoglobulin kappa light chain see AC P0DOX7.</text>
</comment>
<sequence>METPAQLLFLLLLWLPDTTGEIVLTQSPATLSLSPGERATLSCGASQSVSSSYLAWYQQKPGLAPRLLIYDASSRATGIPDRFSGSGSGTDFTLTISRLEPEDFAVYYCQQYGSSP</sequence>